<proteinExistence type="inferred from homology"/>
<dbReference type="EC" id="6.2.1.5" evidence="1"/>
<dbReference type="EMBL" id="AL513382">
    <property type="protein sequence ID" value="CAD05200.1"/>
    <property type="molecule type" value="Genomic_DNA"/>
</dbReference>
<dbReference type="EMBL" id="AE014613">
    <property type="protein sequence ID" value="AAO69752.1"/>
    <property type="molecule type" value="Genomic_DNA"/>
</dbReference>
<dbReference type="RefSeq" id="NP_455294.1">
    <property type="nucleotide sequence ID" value="NC_003198.1"/>
</dbReference>
<dbReference type="RefSeq" id="WP_001048590.1">
    <property type="nucleotide sequence ID" value="NZ_WSUR01000015.1"/>
</dbReference>
<dbReference type="SMR" id="P66870"/>
<dbReference type="STRING" id="220341.gene:17584787"/>
<dbReference type="KEGG" id="stt:t2138"/>
<dbReference type="KEGG" id="sty:STY0781"/>
<dbReference type="PATRIC" id="fig|220341.7.peg.786"/>
<dbReference type="eggNOG" id="COG0045">
    <property type="taxonomic scope" value="Bacteria"/>
</dbReference>
<dbReference type="HOGENOM" id="CLU_037430_4_0_6"/>
<dbReference type="OMA" id="ITACDEV"/>
<dbReference type="OrthoDB" id="9802602at2"/>
<dbReference type="UniPathway" id="UPA00223">
    <property type="reaction ID" value="UER00999"/>
</dbReference>
<dbReference type="Proteomes" id="UP000000541">
    <property type="component" value="Chromosome"/>
</dbReference>
<dbReference type="Proteomes" id="UP000002670">
    <property type="component" value="Chromosome"/>
</dbReference>
<dbReference type="GO" id="GO:0005829">
    <property type="term" value="C:cytosol"/>
    <property type="evidence" value="ECO:0007669"/>
    <property type="project" value="TreeGrafter"/>
</dbReference>
<dbReference type="GO" id="GO:0042709">
    <property type="term" value="C:succinate-CoA ligase complex"/>
    <property type="evidence" value="ECO:0007669"/>
    <property type="project" value="TreeGrafter"/>
</dbReference>
<dbReference type="GO" id="GO:0005524">
    <property type="term" value="F:ATP binding"/>
    <property type="evidence" value="ECO:0007669"/>
    <property type="project" value="UniProtKB-UniRule"/>
</dbReference>
<dbReference type="GO" id="GO:0000287">
    <property type="term" value="F:magnesium ion binding"/>
    <property type="evidence" value="ECO:0007669"/>
    <property type="project" value="UniProtKB-UniRule"/>
</dbReference>
<dbReference type="GO" id="GO:0004775">
    <property type="term" value="F:succinate-CoA ligase (ADP-forming) activity"/>
    <property type="evidence" value="ECO:0007669"/>
    <property type="project" value="UniProtKB-UniRule"/>
</dbReference>
<dbReference type="GO" id="GO:0004776">
    <property type="term" value="F:succinate-CoA ligase (GDP-forming) activity"/>
    <property type="evidence" value="ECO:0007669"/>
    <property type="project" value="RHEA"/>
</dbReference>
<dbReference type="GO" id="GO:0006104">
    <property type="term" value="P:succinyl-CoA metabolic process"/>
    <property type="evidence" value="ECO:0007669"/>
    <property type="project" value="TreeGrafter"/>
</dbReference>
<dbReference type="GO" id="GO:0006099">
    <property type="term" value="P:tricarboxylic acid cycle"/>
    <property type="evidence" value="ECO:0007669"/>
    <property type="project" value="UniProtKB-UniRule"/>
</dbReference>
<dbReference type="FunFam" id="3.30.1490.20:FF:000002">
    <property type="entry name" value="Succinate--CoA ligase [ADP-forming] subunit beta"/>
    <property type="match status" value="1"/>
</dbReference>
<dbReference type="FunFam" id="3.30.470.20:FF:000002">
    <property type="entry name" value="Succinate--CoA ligase [ADP-forming] subunit beta"/>
    <property type="match status" value="1"/>
</dbReference>
<dbReference type="FunFam" id="3.40.50.261:FF:000001">
    <property type="entry name" value="Succinate--CoA ligase [ADP-forming] subunit beta"/>
    <property type="match status" value="1"/>
</dbReference>
<dbReference type="Gene3D" id="3.30.1490.20">
    <property type="entry name" value="ATP-grasp fold, A domain"/>
    <property type="match status" value="1"/>
</dbReference>
<dbReference type="Gene3D" id="3.30.470.20">
    <property type="entry name" value="ATP-grasp fold, B domain"/>
    <property type="match status" value="1"/>
</dbReference>
<dbReference type="Gene3D" id="3.40.50.261">
    <property type="entry name" value="Succinyl-CoA synthetase domains"/>
    <property type="match status" value="1"/>
</dbReference>
<dbReference type="HAMAP" id="MF_00558">
    <property type="entry name" value="Succ_CoA_beta"/>
    <property type="match status" value="1"/>
</dbReference>
<dbReference type="InterPro" id="IPR011761">
    <property type="entry name" value="ATP-grasp"/>
</dbReference>
<dbReference type="InterPro" id="IPR013650">
    <property type="entry name" value="ATP-grasp_succ-CoA_synth-type"/>
</dbReference>
<dbReference type="InterPro" id="IPR013815">
    <property type="entry name" value="ATP_grasp_subdomain_1"/>
</dbReference>
<dbReference type="InterPro" id="IPR017866">
    <property type="entry name" value="Succ-CoA_synthase_bsu_CS"/>
</dbReference>
<dbReference type="InterPro" id="IPR005811">
    <property type="entry name" value="SUCC_ACL_C"/>
</dbReference>
<dbReference type="InterPro" id="IPR005809">
    <property type="entry name" value="Succ_CoA_ligase-like_bsu"/>
</dbReference>
<dbReference type="InterPro" id="IPR016102">
    <property type="entry name" value="Succinyl-CoA_synth-like"/>
</dbReference>
<dbReference type="NCBIfam" id="NF001913">
    <property type="entry name" value="PRK00696.1"/>
    <property type="match status" value="1"/>
</dbReference>
<dbReference type="NCBIfam" id="TIGR01016">
    <property type="entry name" value="sucCoAbeta"/>
    <property type="match status" value="1"/>
</dbReference>
<dbReference type="PANTHER" id="PTHR11815:SF10">
    <property type="entry name" value="SUCCINATE--COA LIGASE [GDP-FORMING] SUBUNIT BETA, MITOCHONDRIAL"/>
    <property type="match status" value="1"/>
</dbReference>
<dbReference type="PANTHER" id="PTHR11815">
    <property type="entry name" value="SUCCINYL-COA SYNTHETASE BETA CHAIN"/>
    <property type="match status" value="1"/>
</dbReference>
<dbReference type="Pfam" id="PF08442">
    <property type="entry name" value="ATP-grasp_2"/>
    <property type="match status" value="1"/>
</dbReference>
<dbReference type="Pfam" id="PF00549">
    <property type="entry name" value="Ligase_CoA"/>
    <property type="match status" value="1"/>
</dbReference>
<dbReference type="PIRSF" id="PIRSF001554">
    <property type="entry name" value="SucCS_beta"/>
    <property type="match status" value="1"/>
</dbReference>
<dbReference type="SUPFAM" id="SSF56059">
    <property type="entry name" value="Glutathione synthetase ATP-binding domain-like"/>
    <property type="match status" value="1"/>
</dbReference>
<dbReference type="SUPFAM" id="SSF52210">
    <property type="entry name" value="Succinyl-CoA synthetase domains"/>
    <property type="match status" value="1"/>
</dbReference>
<dbReference type="PROSITE" id="PS50975">
    <property type="entry name" value="ATP_GRASP"/>
    <property type="match status" value="1"/>
</dbReference>
<dbReference type="PROSITE" id="PS01217">
    <property type="entry name" value="SUCCINYL_COA_LIG_3"/>
    <property type="match status" value="1"/>
</dbReference>
<name>SUCC_SALTI</name>
<keyword id="KW-0067">ATP-binding</keyword>
<keyword id="KW-0436">Ligase</keyword>
<keyword id="KW-0460">Magnesium</keyword>
<keyword id="KW-0479">Metal-binding</keyword>
<keyword id="KW-0547">Nucleotide-binding</keyword>
<keyword id="KW-0816">Tricarboxylic acid cycle</keyword>
<sequence length="388" mass="41481">MNLHEYQAKQLFARYGLPAPVGYACTTPREAEEAASKIGAGPWVVKCQVHAGGRGKAGGVKVVKSKEEIRAFAENWLGKRLVTYQTDANGQPVNQILVEAATDIGKELYLGAVVDRSSRRVVFMASTEGGVEIEKVAEETPHLIHKVALDPLTGPMPYQGRELAFKLGLEGKLVQQFTKIFMGLATIFLERDLALIEINPLVITKQGDLICLDGKLGADGNALFRQPDLREMRDQSQEDPREAQAAQWELNYVALDGNIGCMVNGAGLAMGTMDIVKLHGGEPANFLDVGGGATKERVTEAFKIILSDDNVKAVLVNIFGGIVRCDLIADGIIGAVEEVGVNVPVVVRLEGNNAELGAKKLADSGLNIIAAKSLTDAAQQVVAAVEGK</sequence>
<protein>
    <recommendedName>
        <fullName evidence="1">Succinate--CoA ligase [ADP-forming] subunit beta</fullName>
        <ecNumber evidence="1">6.2.1.5</ecNumber>
    </recommendedName>
    <alternativeName>
        <fullName evidence="1">Succinyl-CoA synthetase subunit beta</fullName>
        <shortName evidence="1">SCS-beta</shortName>
    </alternativeName>
</protein>
<organism>
    <name type="scientific">Salmonella typhi</name>
    <dbReference type="NCBI Taxonomy" id="90370"/>
    <lineage>
        <taxon>Bacteria</taxon>
        <taxon>Pseudomonadati</taxon>
        <taxon>Pseudomonadota</taxon>
        <taxon>Gammaproteobacteria</taxon>
        <taxon>Enterobacterales</taxon>
        <taxon>Enterobacteriaceae</taxon>
        <taxon>Salmonella</taxon>
    </lineage>
</organism>
<comment type="function">
    <text evidence="1">Succinyl-CoA synthetase functions in the citric acid cycle (TCA), coupling the hydrolysis of succinyl-CoA to the synthesis of either ATP or GTP and thus represents the only step of substrate-level phosphorylation in the TCA. The beta subunit provides nucleotide specificity of the enzyme and binds the substrate succinate, while the binding sites for coenzyme A and phosphate are found in the alpha subunit.</text>
</comment>
<comment type="catalytic activity">
    <reaction evidence="1">
        <text>succinate + ATP + CoA = succinyl-CoA + ADP + phosphate</text>
        <dbReference type="Rhea" id="RHEA:17661"/>
        <dbReference type="ChEBI" id="CHEBI:30031"/>
        <dbReference type="ChEBI" id="CHEBI:30616"/>
        <dbReference type="ChEBI" id="CHEBI:43474"/>
        <dbReference type="ChEBI" id="CHEBI:57287"/>
        <dbReference type="ChEBI" id="CHEBI:57292"/>
        <dbReference type="ChEBI" id="CHEBI:456216"/>
        <dbReference type="EC" id="6.2.1.5"/>
    </reaction>
    <physiologicalReaction direction="right-to-left" evidence="1">
        <dbReference type="Rhea" id="RHEA:17663"/>
    </physiologicalReaction>
</comment>
<comment type="catalytic activity">
    <reaction evidence="1">
        <text>GTP + succinate + CoA = succinyl-CoA + GDP + phosphate</text>
        <dbReference type="Rhea" id="RHEA:22120"/>
        <dbReference type="ChEBI" id="CHEBI:30031"/>
        <dbReference type="ChEBI" id="CHEBI:37565"/>
        <dbReference type="ChEBI" id="CHEBI:43474"/>
        <dbReference type="ChEBI" id="CHEBI:57287"/>
        <dbReference type="ChEBI" id="CHEBI:57292"/>
        <dbReference type="ChEBI" id="CHEBI:58189"/>
    </reaction>
    <physiologicalReaction direction="right-to-left" evidence="1">
        <dbReference type="Rhea" id="RHEA:22122"/>
    </physiologicalReaction>
</comment>
<comment type="cofactor">
    <cofactor evidence="1">
        <name>Mg(2+)</name>
        <dbReference type="ChEBI" id="CHEBI:18420"/>
    </cofactor>
    <text evidence="1">Binds 1 Mg(2+) ion per subunit.</text>
</comment>
<comment type="pathway">
    <text evidence="1">Carbohydrate metabolism; tricarboxylic acid cycle; succinate from succinyl-CoA (ligase route): step 1/1.</text>
</comment>
<comment type="subunit">
    <text evidence="1">Heterotetramer of two alpha and two beta subunits.</text>
</comment>
<comment type="similarity">
    <text evidence="1">Belongs to the succinate/malate CoA ligase beta subunit family.</text>
</comment>
<evidence type="ECO:0000255" key="1">
    <source>
        <dbReference type="HAMAP-Rule" id="MF_00558"/>
    </source>
</evidence>
<feature type="chain" id="PRO_0000102855" description="Succinate--CoA ligase [ADP-forming] subunit beta">
    <location>
        <begin position="1"/>
        <end position="388"/>
    </location>
</feature>
<feature type="domain" description="ATP-grasp" evidence="1">
    <location>
        <begin position="9"/>
        <end position="244"/>
    </location>
</feature>
<feature type="binding site" evidence="1">
    <location>
        <position position="46"/>
    </location>
    <ligand>
        <name>ATP</name>
        <dbReference type="ChEBI" id="CHEBI:30616"/>
    </ligand>
</feature>
<feature type="binding site" evidence="1">
    <location>
        <begin position="53"/>
        <end position="55"/>
    </location>
    <ligand>
        <name>ATP</name>
        <dbReference type="ChEBI" id="CHEBI:30616"/>
    </ligand>
</feature>
<feature type="binding site" evidence="1">
    <location>
        <position position="99"/>
    </location>
    <ligand>
        <name>ATP</name>
        <dbReference type="ChEBI" id="CHEBI:30616"/>
    </ligand>
</feature>
<feature type="binding site" evidence="1">
    <location>
        <position position="102"/>
    </location>
    <ligand>
        <name>ATP</name>
        <dbReference type="ChEBI" id="CHEBI:30616"/>
    </ligand>
</feature>
<feature type="binding site" evidence="1">
    <location>
        <position position="107"/>
    </location>
    <ligand>
        <name>ATP</name>
        <dbReference type="ChEBI" id="CHEBI:30616"/>
    </ligand>
</feature>
<feature type="binding site" evidence="1">
    <location>
        <position position="199"/>
    </location>
    <ligand>
        <name>Mg(2+)</name>
        <dbReference type="ChEBI" id="CHEBI:18420"/>
    </ligand>
</feature>
<feature type="binding site" evidence="1">
    <location>
        <position position="213"/>
    </location>
    <ligand>
        <name>Mg(2+)</name>
        <dbReference type="ChEBI" id="CHEBI:18420"/>
    </ligand>
</feature>
<feature type="binding site" evidence="1">
    <location>
        <position position="264"/>
    </location>
    <ligand>
        <name>substrate</name>
        <note>ligand shared with subunit alpha</note>
    </ligand>
</feature>
<feature type="binding site" evidence="1">
    <location>
        <begin position="321"/>
        <end position="323"/>
    </location>
    <ligand>
        <name>substrate</name>
        <note>ligand shared with subunit alpha</note>
    </ligand>
</feature>
<gene>
    <name evidence="1" type="primary">sucC</name>
    <name type="ordered locus">STY0781</name>
    <name type="ordered locus">t2138</name>
</gene>
<accession>P66870</accession>
<accession>Q8XEP0</accession>
<reference key="1">
    <citation type="journal article" date="2001" name="Nature">
        <title>Complete genome sequence of a multiple drug resistant Salmonella enterica serovar Typhi CT18.</title>
        <authorList>
            <person name="Parkhill J."/>
            <person name="Dougan G."/>
            <person name="James K.D."/>
            <person name="Thomson N.R."/>
            <person name="Pickard D."/>
            <person name="Wain J."/>
            <person name="Churcher C.M."/>
            <person name="Mungall K.L."/>
            <person name="Bentley S.D."/>
            <person name="Holden M.T.G."/>
            <person name="Sebaihia M."/>
            <person name="Baker S."/>
            <person name="Basham D."/>
            <person name="Brooks K."/>
            <person name="Chillingworth T."/>
            <person name="Connerton P."/>
            <person name="Cronin A."/>
            <person name="Davis P."/>
            <person name="Davies R.M."/>
            <person name="Dowd L."/>
            <person name="White N."/>
            <person name="Farrar J."/>
            <person name="Feltwell T."/>
            <person name="Hamlin N."/>
            <person name="Haque A."/>
            <person name="Hien T.T."/>
            <person name="Holroyd S."/>
            <person name="Jagels K."/>
            <person name="Krogh A."/>
            <person name="Larsen T.S."/>
            <person name="Leather S."/>
            <person name="Moule S."/>
            <person name="O'Gaora P."/>
            <person name="Parry C."/>
            <person name="Quail M.A."/>
            <person name="Rutherford K.M."/>
            <person name="Simmonds M."/>
            <person name="Skelton J."/>
            <person name="Stevens K."/>
            <person name="Whitehead S."/>
            <person name="Barrell B.G."/>
        </authorList>
    </citation>
    <scope>NUCLEOTIDE SEQUENCE [LARGE SCALE GENOMIC DNA]</scope>
    <source>
        <strain>CT18</strain>
    </source>
</reference>
<reference key="2">
    <citation type="journal article" date="2003" name="J. Bacteriol.">
        <title>Comparative genomics of Salmonella enterica serovar Typhi strains Ty2 and CT18.</title>
        <authorList>
            <person name="Deng W."/>
            <person name="Liou S.-R."/>
            <person name="Plunkett G. III"/>
            <person name="Mayhew G.F."/>
            <person name="Rose D.J."/>
            <person name="Burland V."/>
            <person name="Kodoyianni V."/>
            <person name="Schwartz D.C."/>
            <person name="Blattner F.R."/>
        </authorList>
    </citation>
    <scope>NUCLEOTIDE SEQUENCE [LARGE SCALE GENOMIC DNA]</scope>
    <source>
        <strain>ATCC 700931 / Ty2</strain>
    </source>
</reference>